<protein>
    <recommendedName>
        <fullName>Malate dehydrogenase</fullName>
        <ecNumber>1.1.1.37</ecNumber>
    </recommendedName>
</protein>
<keyword id="KW-0903">Direct protein sequencing</keyword>
<keyword id="KW-0520">NAD</keyword>
<keyword id="KW-0560">Oxidoreductase</keyword>
<keyword id="KW-0816">Tricarboxylic acid cycle</keyword>
<evidence type="ECO:0000250" key="1"/>
<evidence type="ECO:0000255" key="2">
    <source>
        <dbReference type="PROSITE-ProRule" id="PRU10004"/>
    </source>
</evidence>
<evidence type="ECO:0000305" key="3"/>
<name>MDH_DELAC</name>
<proteinExistence type="evidence at protein level"/>
<feature type="chain" id="PRO_0000113361" description="Malate dehydrogenase">
    <location>
        <begin position="1"/>
        <end position="19" status="greater than"/>
    </location>
</feature>
<feature type="binding site" evidence="1">
    <location>
        <begin position="11"/>
        <end position="17"/>
    </location>
    <ligand>
        <name>NAD(+)</name>
        <dbReference type="ChEBI" id="CHEBI:57540"/>
    </ligand>
</feature>
<feature type="non-terminal residue">
    <location>
        <position position="19"/>
    </location>
</feature>
<dbReference type="EC" id="1.1.1.37"/>
<dbReference type="GO" id="GO:0030060">
    <property type="term" value="F:L-malate dehydrogenase (NAD+) activity"/>
    <property type="evidence" value="ECO:0007669"/>
    <property type="project" value="UniProtKB-EC"/>
</dbReference>
<dbReference type="GO" id="GO:0006099">
    <property type="term" value="P:tricarboxylic acid cycle"/>
    <property type="evidence" value="ECO:0007669"/>
    <property type="project" value="UniProtKB-KW"/>
</dbReference>
<reference key="1">
    <citation type="journal article" date="1997" name="J. Bacteriol.">
        <title>Structural studies of malate dehydrogenases (MDHs): MDHs in Brevundimonas species are the first reported MDHs in Proteobacteria which resemble lactate dehydrogenases in primary structure.</title>
        <authorList>
            <person name="Charnock C."/>
        </authorList>
    </citation>
    <scope>PROTEIN SEQUENCE</scope>
    <source>
        <strain>ATCC 15668 / DSM 39 / BCRC 14819 / JCM 5833 / NBRC 14950 / NCIMB 9681 / NCTC 10683 / 2167</strain>
    </source>
</reference>
<comment type="function">
    <text evidence="1">Catalyzes the reversible oxidation of malate to oxaloacetate.</text>
</comment>
<comment type="catalytic activity">
    <reaction evidence="2">
        <text>(S)-malate + NAD(+) = oxaloacetate + NADH + H(+)</text>
        <dbReference type="Rhea" id="RHEA:21432"/>
        <dbReference type="ChEBI" id="CHEBI:15378"/>
        <dbReference type="ChEBI" id="CHEBI:15589"/>
        <dbReference type="ChEBI" id="CHEBI:16452"/>
        <dbReference type="ChEBI" id="CHEBI:57540"/>
        <dbReference type="ChEBI" id="CHEBI:57945"/>
        <dbReference type="EC" id="1.1.1.37"/>
    </reaction>
</comment>
<comment type="similarity">
    <text evidence="3">Belongs to the LDH/MDH superfamily. MDH type 2 family.</text>
</comment>
<organism>
    <name type="scientific">Delftia acidovorans</name>
    <name type="common">Pseudomonas acidovorans</name>
    <name type="synonym">Comamonas acidovorans</name>
    <dbReference type="NCBI Taxonomy" id="80866"/>
    <lineage>
        <taxon>Bacteria</taxon>
        <taxon>Pseudomonadati</taxon>
        <taxon>Pseudomonadota</taxon>
        <taxon>Betaproteobacteria</taxon>
        <taxon>Burkholderiales</taxon>
        <taxon>Comamonadaceae</taxon>
        <taxon>Delftia</taxon>
    </lineage>
</organism>
<accession>P80539</accession>
<gene>
    <name type="primary">mdh</name>
</gene>
<sequence>XKKPVXVAVTGAAGQIGYA</sequence>